<reference evidence="5" key="1">
    <citation type="submission" date="2003-08" db="EMBL/GenBank/DDBJ databases">
        <title>Identification of new putative rat taste receptors belonging to the T2R family.</title>
        <authorList>
            <person name="Conte C."/>
            <person name="Ebeling M."/>
            <person name="Marcuz A."/>
            <person name="Andres-Barquin P.J."/>
        </authorList>
    </citation>
    <scope>NUCLEOTIDE SEQUENCE [GENOMIC DNA]</scope>
    <source>
        <strain evidence="5">Sprague-Dawley</strain>
    </source>
</reference>
<gene>
    <name evidence="2" type="primary">Tas2r3</name>
    <name evidence="6" type="synonym">Tas2r137</name>
</gene>
<protein>
    <recommendedName>
        <fullName>Taste receptor type 2 member 3</fullName>
        <shortName>T2R3</shortName>
    </recommendedName>
    <alternativeName>
        <fullName>T2R11</fullName>
    </alternativeName>
    <alternativeName>
        <fullName evidence="6">Taste receptor type 2 member 137</fullName>
    </alternativeName>
</protein>
<keyword id="KW-0297">G-protein coupled receptor</keyword>
<keyword id="KW-0325">Glycoprotein</keyword>
<keyword id="KW-0472">Membrane</keyword>
<keyword id="KW-0675">Receptor</keyword>
<keyword id="KW-1185">Reference proteome</keyword>
<keyword id="KW-0716">Sensory transduction</keyword>
<keyword id="KW-0919">Taste</keyword>
<keyword id="KW-0807">Transducer</keyword>
<keyword id="KW-0812">Transmembrane</keyword>
<keyword id="KW-1133">Transmembrane helix</keyword>
<name>TA2R3_RAT</name>
<accession>Q67ET7</accession>
<dbReference type="EMBL" id="AY362733">
    <property type="protein sequence ID" value="AAR13342.1"/>
    <property type="molecule type" value="Genomic_DNA"/>
</dbReference>
<dbReference type="RefSeq" id="NP_001020320.1">
    <property type="nucleotide sequence ID" value="NM_001025149.1"/>
</dbReference>
<dbReference type="RefSeq" id="XP_006236424.1">
    <property type="nucleotide sequence ID" value="XM_006236362.3"/>
</dbReference>
<dbReference type="SMR" id="Q67ET7"/>
<dbReference type="FunCoup" id="Q67ET7">
    <property type="interactions" value="87"/>
</dbReference>
<dbReference type="STRING" id="10116.ENSRNOP00000059873"/>
<dbReference type="GlyCosmos" id="Q67ET7">
    <property type="glycosylation" value="1 site, No reported glycans"/>
</dbReference>
<dbReference type="GlyGen" id="Q67ET7">
    <property type="glycosylation" value="1 site"/>
</dbReference>
<dbReference type="PhosphoSitePlus" id="Q67ET7"/>
<dbReference type="PaxDb" id="10116-ENSRNOP00000059873"/>
<dbReference type="Ensembl" id="ENSRNOT00000046917.4">
    <property type="protein sequence ID" value="ENSRNOP00000059873.1"/>
    <property type="gene ID" value="ENSRNOG00000030413.4"/>
</dbReference>
<dbReference type="GeneID" id="500089"/>
<dbReference type="KEGG" id="rno:500089"/>
<dbReference type="UCSC" id="RGD:1560602">
    <property type="organism name" value="rat"/>
</dbReference>
<dbReference type="AGR" id="RGD:1560602"/>
<dbReference type="CTD" id="574417"/>
<dbReference type="RGD" id="1560602">
    <property type="gene designation" value="Tas2r137"/>
</dbReference>
<dbReference type="eggNOG" id="ENOG502SKRK">
    <property type="taxonomic scope" value="Eukaryota"/>
</dbReference>
<dbReference type="GeneTree" id="ENSGT01100000263477"/>
<dbReference type="HOGENOM" id="CLU_072337_3_0_1"/>
<dbReference type="InParanoid" id="Q67ET7"/>
<dbReference type="OMA" id="IDIFWTF"/>
<dbReference type="OrthoDB" id="8876749at2759"/>
<dbReference type="PhylomeDB" id="Q67ET7"/>
<dbReference type="TreeFam" id="TF335891"/>
<dbReference type="Reactome" id="R-RNO-418594">
    <property type="pathway name" value="G alpha (i) signalling events"/>
</dbReference>
<dbReference type="Reactome" id="R-RNO-420499">
    <property type="pathway name" value="Class C/3 (Metabotropic glutamate/pheromone receptors)"/>
</dbReference>
<dbReference type="Reactome" id="R-RNO-9717207">
    <property type="pathway name" value="Sensory perception of sweet, bitter, and umami (glutamate) taste"/>
</dbReference>
<dbReference type="PRO" id="PR:Q67ET7"/>
<dbReference type="Proteomes" id="UP000002494">
    <property type="component" value="Chromosome 4"/>
</dbReference>
<dbReference type="Bgee" id="ENSRNOG00000030413">
    <property type="expression patterns" value="Expressed in cerebellum"/>
</dbReference>
<dbReference type="GO" id="GO:0016020">
    <property type="term" value="C:membrane"/>
    <property type="evidence" value="ECO:0000318"/>
    <property type="project" value="GO_Central"/>
</dbReference>
<dbReference type="GO" id="GO:0033038">
    <property type="term" value="F:bitter taste receptor activity"/>
    <property type="evidence" value="ECO:0000266"/>
    <property type="project" value="RGD"/>
</dbReference>
<dbReference type="GO" id="GO:0004930">
    <property type="term" value="F:G protein-coupled receptor activity"/>
    <property type="evidence" value="ECO:0007669"/>
    <property type="project" value="UniProtKB-KW"/>
</dbReference>
<dbReference type="GO" id="GO:0001580">
    <property type="term" value="P:detection of chemical stimulus involved in sensory perception of bitter taste"/>
    <property type="evidence" value="ECO:0000266"/>
    <property type="project" value="RGD"/>
</dbReference>
<dbReference type="CDD" id="cd15020">
    <property type="entry name" value="7tm_TAS2R3"/>
    <property type="match status" value="1"/>
</dbReference>
<dbReference type="FunFam" id="1.20.1070.10:FF:000042">
    <property type="entry name" value="Taste receptor type 2 member 7"/>
    <property type="match status" value="1"/>
</dbReference>
<dbReference type="Gene3D" id="1.20.1070.10">
    <property type="entry name" value="Rhodopsin 7-helix transmembrane proteins"/>
    <property type="match status" value="1"/>
</dbReference>
<dbReference type="InterPro" id="IPR017452">
    <property type="entry name" value="GPCR_Rhodpsn_7TM"/>
</dbReference>
<dbReference type="InterPro" id="IPR007960">
    <property type="entry name" value="TAS2R"/>
</dbReference>
<dbReference type="PANTHER" id="PTHR11394">
    <property type="entry name" value="TASTE RECEPTOR TYPE 2"/>
    <property type="match status" value="1"/>
</dbReference>
<dbReference type="PANTHER" id="PTHR11394:SF49">
    <property type="entry name" value="TASTE RECEPTOR TYPE 2 MEMBER 3"/>
    <property type="match status" value="1"/>
</dbReference>
<dbReference type="Pfam" id="PF05296">
    <property type="entry name" value="TAS2R"/>
    <property type="match status" value="1"/>
</dbReference>
<dbReference type="SUPFAM" id="SSF81321">
    <property type="entry name" value="Family A G protein-coupled receptor-like"/>
    <property type="match status" value="1"/>
</dbReference>
<dbReference type="PROSITE" id="PS50262">
    <property type="entry name" value="G_PROTEIN_RECEP_F1_2"/>
    <property type="match status" value="1"/>
</dbReference>
<sequence>MLGFTEGIFLVLTVTEFILGNLVNGFIVSVNGSHWFKSKKISLSDFIITSLALFRIFLLWIIFTDSLIIVFSYHTHDSGIRMQLIDVFWTFTNHFSIWLISCLSVFYCLKIATFSHPSFLWLKWRASRVVVGMLWGALVLSCVCTMSLMNEFKIYSALTGSRDTQNMTEYIRLKRHEYNLMHVLGNLWKIPSLIVSLIAYFLLLLSLGKHTQQMQKYSVGSRDQSAEAHRRAMRIILSFLLFFLFYFLSFVILSSSRFLPETKIARIIGVVITMSYLVGDSLILILGNNKLKQTFVAILPCECGHPKPGSKRFFAS</sequence>
<proteinExistence type="inferred from homology"/>
<organism>
    <name type="scientific">Rattus norvegicus</name>
    <name type="common">Rat</name>
    <dbReference type="NCBI Taxonomy" id="10116"/>
    <lineage>
        <taxon>Eukaryota</taxon>
        <taxon>Metazoa</taxon>
        <taxon>Chordata</taxon>
        <taxon>Craniata</taxon>
        <taxon>Vertebrata</taxon>
        <taxon>Euteleostomi</taxon>
        <taxon>Mammalia</taxon>
        <taxon>Eutheria</taxon>
        <taxon>Euarchontoglires</taxon>
        <taxon>Glires</taxon>
        <taxon>Rodentia</taxon>
        <taxon>Myomorpha</taxon>
        <taxon>Muroidea</taxon>
        <taxon>Muridae</taxon>
        <taxon>Murinae</taxon>
        <taxon>Rattus</taxon>
    </lineage>
</organism>
<feature type="chain" id="PRO_0000082203" description="Taste receptor type 2 member 3">
    <location>
        <begin position="1"/>
        <end position="316"/>
    </location>
</feature>
<feature type="topological domain" description="Extracellular" evidence="3">
    <location>
        <begin position="1"/>
        <end position="7"/>
    </location>
</feature>
<feature type="transmembrane region" description="Helical; Name=1" evidence="3">
    <location>
        <begin position="8"/>
        <end position="28"/>
    </location>
</feature>
<feature type="topological domain" description="Cytoplasmic" evidence="3">
    <location>
        <begin position="29"/>
        <end position="50"/>
    </location>
</feature>
<feature type="transmembrane region" description="Helical; Name=2" evidence="3">
    <location>
        <begin position="51"/>
        <end position="71"/>
    </location>
</feature>
<feature type="topological domain" description="Extracellular" evidence="3">
    <location>
        <begin position="72"/>
        <end position="86"/>
    </location>
</feature>
<feature type="transmembrane region" description="Helical; Name=3" evidence="3">
    <location>
        <begin position="87"/>
        <end position="107"/>
    </location>
</feature>
<feature type="topological domain" description="Cytoplasmic" evidence="3">
    <location>
        <begin position="108"/>
        <end position="128"/>
    </location>
</feature>
<feature type="transmembrane region" description="Helical; Name=4" evidence="3">
    <location>
        <begin position="129"/>
        <end position="149"/>
    </location>
</feature>
<feature type="topological domain" description="Extracellular" evidence="3">
    <location>
        <begin position="150"/>
        <end position="186"/>
    </location>
</feature>
<feature type="transmembrane region" description="Helical; Name=5" evidence="3">
    <location>
        <begin position="187"/>
        <end position="207"/>
    </location>
</feature>
<feature type="topological domain" description="Cytoplasmic" evidence="3">
    <location>
        <begin position="208"/>
        <end position="234"/>
    </location>
</feature>
<feature type="transmembrane region" description="Helical; Name=6" evidence="3">
    <location>
        <begin position="235"/>
        <end position="255"/>
    </location>
</feature>
<feature type="topological domain" description="Extracellular" evidence="3">
    <location>
        <begin position="256"/>
        <end position="266"/>
    </location>
</feature>
<feature type="transmembrane region" description="Helical; Name=7" evidence="3">
    <location>
        <begin position="267"/>
        <end position="287"/>
    </location>
</feature>
<feature type="topological domain" description="Cytoplasmic" evidence="3">
    <location>
        <begin position="288"/>
        <end position="316"/>
    </location>
</feature>
<feature type="glycosylation site" description="N-linked (GlcNAc...) asparagine" evidence="3">
    <location>
        <position position="166"/>
    </location>
</feature>
<evidence type="ECO:0000250" key="1"/>
<evidence type="ECO:0000250" key="2">
    <source>
        <dbReference type="UniProtKB" id="Q9NYW6"/>
    </source>
</evidence>
<evidence type="ECO:0000255" key="3"/>
<evidence type="ECO:0000305" key="4"/>
<evidence type="ECO:0000312" key="5">
    <source>
        <dbReference type="EMBL" id="AAR13342.1"/>
    </source>
</evidence>
<evidence type="ECO:0000312" key="6">
    <source>
        <dbReference type="RGD" id="1560602"/>
    </source>
</evidence>
<comment type="function">
    <text evidence="1">Gustducin-coupled receptor implicated in the perception of bitter compounds in the oral cavity and the gastrointestinal tract. Signals through PLCB2 and the calcium-regulated cation channel TRPM5 (By similarity).</text>
</comment>
<comment type="subcellular location">
    <subcellularLocation>
        <location evidence="4">Membrane</location>
        <topology evidence="4">Multi-pass membrane protein</topology>
    </subcellularLocation>
</comment>
<comment type="miscellaneous">
    <text>Several bitter taste receptors are expressed in a single taste receptor cell.</text>
</comment>
<comment type="similarity">
    <text evidence="3">Belongs to the G-protein coupled receptor T2R family.</text>
</comment>